<protein>
    <recommendedName>
        <fullName evidence="1">Large ribosomal subunit protein uL22</fullName>
    </recommendedName>
    <alternativeName>
        <fullName evidence="2">50S ribosomal protein L22</fullName>
    </alternativeName>
</protein>
<sequence length="114" mass="12431">MAEITSAKAMARTVRVSPRKTRLVLDLIRGKKVADAIAILKFTPNKAARVIEKTLNSAIANAENNFGLEKANLVVSETFANEGPTMKRFRPRAKGSASPINKRTTHVTVVVSEK</sequence>
<name>RL22_STREM</name>
<reference key="1">
    <citation type="journal article" date="2008" name="PLoS ONE">
        <title>Genome sequence of a lancefield group C Streptococcus zooepidemicus strain causing epidemic nephritis: new information about an old disease.</title>
        <authorList>
            <person name="Beres S.B."/>
            <person name="Sesso R."/>
            <person name="Pinto S.W.L."/>
            <person name="Hoe N.P."/>
            <person name="Porcella S.F."/>
            <person name="Deleo F.R."/>
            <person name="Musser J.M."/>
        </authorList>
    </citation>
    <scope>NUCLEOTIDE SEQUENCE [LARGE SCALE GENOMIC DNA]</scope>
    <source>
        <strain>MGCS10565</strain>
    </source>
</reference>
<feature type="chain" id="PRO_1000142312" description="Large ribosomal subunit protein uL22">
    <location>
        <begin position="1"/>
        <end position="114"/>
    </location>
</feature>
<proteinExistence type="inferred from homology"/>
<gene>
    <name evidence="1" type="primary">rplV</name>
    <name type="ordered locus">Sez_0061</name>
</gene>
<evidence type="ECO:0000255" key="1">
    <source>
        <dbReference type="HAMAP-Rule" id="MF_01331"/>
    </source>
</evidence>
<evidence type="ECO:0000305" key="2"/>
<organism>
    <name type="scientific">Streptococcus equi subsp. zooepidemicus (strain MGCS10565)</name>
    <dbReference type="NCBI Taxonomy" id="552526"/>
    <lineage>
        <taxon>Bacteria</taxon>
        <taxon>Bacillati</taxon>
        <taxon>Bacillota</taxon>
        <taxon>Bacilli</taxon>
        <taxon>Lactobacillales</taxon>
        <taxon>Streptococcaceae</taxon>
        <taxon>Streptococcus</taxon>
    </lineage>
</organism>
<comment type="function">
    <text evidence="1">This protein binds specifically to 23S rRNA; its binding is stimulated by other ribosomal proteins, e.g. L4, L17, and L20. It is important during the early stages of 50S assembly. It makes multiple contacts with different domains of the 23S rRNA in the assembled 50S subunit and ribosome (By similarity).</text>
</comment>
<comment type="function">
    <text evidence="1">The globular domain of the protein is located near the polypeptide exit tunnel on the outside of the subunit, while an extended beta-hairpin is found that lines the wall of the exit tunnel in the center of the 70S ribosome.</text>
</comment>
<comment type="subunit">
    <text evidence="1">Part of the 50S ribosomal subunit.</text>
</comment>
<comment type="similarity">
    <text evidence="1">Belongs to the universal ribosomal protein uL22 family.</text>
</comment>
<dbReference type="EMBL" id="CP001129">
    <property type="protein sequence ID" value="ACG61444.1"/>
    <property type="molecule type" value="Genomic_DNA"/>
</dbReference>
<dbReference type="RefSeq" id="WP_002986651.1">
    <property type="nucleotide sequence ID" value="NC_011134.1"/>
</dbReference>
<dbReference type="SMR" id="B4U505"/>
<dbReference type="GeneID" id="83703909"/>
<dbReference type="KEGG" id="sez:Sez_0061"/>
<dbReference type="HOGENOM" id="CLU_083987_3_3_9"/>
<dbReference type="Proteomes" id="UP000001873">
    <property type="component" value="Chromosome"/>
</dbReference>
<dbReference type="GO" id="GO:0022625">
    <property type="term" value="C:cytosolic large ribosomal subunit"/>
    <property type="evidence" value="ECO:0007669"/>
    <property type="project" value="TreeGrafter"/>
</dbReference>
<dbReference type="GO" id="GO:0019843">
    <property type="term" value="F:rRNA binding"/>
    <property type="evidence" value="ECO:0007669"/>
    <property type="project" value="UniProtKB-UniRule"/>
</dbReference>
<dbReference type="GO" id="GO:0003735">
    <property type="term" value="F:structural constituent of ribosome"/>
    <property type="evidence" value="ECO:0007669"/>
    <property type="project" value="InterPro"/>
</dbReference>
<dbReference type="GO" id="GO:0006412">
    <property type="term" value="P:translation"/>
    <property type="evidence" value="ECO:0007669"/>
    <property type="project" value="UniProtKB-UniRule"/>
</dbReference>
<dbReference type="CDD" id="cd00336">
    <property type="entry name" value="Ribosomal_L22"/>
    <property type="match status" value="1"/>
</dbReference>
<dbReference type="FunFam" id="3.90.470.10:FF:000001">
    <property type="entry name" value="50S ribosomal protein L22"/>
    <property type="match status" value="1"/>
</dbReference>
<dbReference type="Gene3D" id="3.90.470.10">
    <property type="entry name" value="Ribosomal protein L22/L17"/>
    <property type="match status" value="1"/>
</dbReference>
<dbReference type="HAMAP" id="MF_01331_B">
    <property type="entry name" value="Ribosomal_uL22_B"/>
    <property type="match status" value="1"/>
</dbReference>
<dbReference type="InterPro" id="IPR001063">
    <property type="entry name" value="Ribosomal_uL22"/>
</dbReference>
<dbReference type="InterPro" id="IPR005727">
    <property type="entry name" value="Ribosomal_uL22_bac/chlpt-type"/>
</dbReference>
<dbReference type="InterPro" id="IPR047867">
    <property type="entry name" value="Ribosomal_uL22_bac/org-type"/>
</dbReference>
<dbReference type="InterPro" id="IPR018260">
    <property type="entry name" value="Ribosomal_uL22_CS"/>
</dbReference>
<dbReference type="InterPro" id="IPR036394">
    <property type="entry name" value="Ribosomal_uL22_sf"/>
</dbReference>
<dbReference type="NCBIfam" id="TIGR01044">
    <property type="entry name" value="rplV_bact"/>
    <property type="match status" value="1"/>
</dbReference>
<dbReference type="PANTHER" id="PTHR13501">
    <property type="entry name" value="CHLOROPLAST 50S RIBOSOMAL PROTEIN L22-RELATED"/>
    <property type="match status" value="1"/>
</dbReference>
<dbReference type="PANTHER" id="PTHR13501:SF8">
    <property type="entry name" value="LARGE RIBOSOMAL SUBUNIT PROTEIN UL22M"/>
    <property type="match status" value="1"/>
</dbReference>
<dbReference type="Pfam" id="PF00237">
    <property type="entry name" value="Ribosomal_L22"/>
    <property type="match status" value="1"/>
</dbReference>
<dbReference type="SUPFAM" id="SSF54843">
    <property type="entry name" value="Ribosomal protein L22"/>
    <property type="match status" value="1"/>
</dbReference>
<dbReference type="PROSITE" id="PS00464">
    <property type="entry name" value="RIBOSOMAL_L22"/>
    <property type="match status" value="1"/>
</dbReference>
<accession>B4U505</accession>
<keyword id="KW-0687">Ribonucleoprotein</keyword>
<keyword id="KW-0689">Ribosomal protein</keyword>
<keyword id="KW-0694">RNA-binding</keyword>
<keyword id="KW-0699">rRNA-binding</keyword>